<comment type="function">
    <text evidence="1">Catalyzes the condensation of the acetyl group of acetyl-CoA with 3-methyl-2-oxobutanoate (2-ketoisovalerate) to form 3-carboxy-3-hydroxy-4-methylpentanoate (2-isopropylmalate).</text>
</comment>
<comment type="catalytic activity">
    <reaction evidence="1">
        <text>3-methyl-2-oxobutanoate + acetyl-CoA + H2O = (2S)-2-isopropylmalate + CoA + H(+)</text>
        <dbReference type="Rhea" id="RHEA:21524"/>
        <dbReference type="ChEBI" id="CHEBI:1178"/>
        <dbReference type="ChEBI" id="CHEBI:11851"/>
        <dbReference type="ChEBI" id="CHEBI:15377"/>
        <dbReference type="ChEBI" id="CHEBI:15378"/>
        <dbReference type="ChEBI" id="CHEBI:57287"/>
        <dbReference type="ChEBI" id="CHEBI:57288"/>
        <dbReference type="EC" id="2.3.3.13"/>
    </reaction>
</comment>
<comment type="cofactor">
    <cofactor evidence="1">
        <name>Mn(2+)</name>
        <dbReference type="ChEBI" id="CHEBI:29035"/>
    </cofactor>
</comment>
<comment type="pathway">
    <text evidence="1">Amino-acid biosynthesis; L-leucine biosynthesis; L-leucine from 3-methyl-2-oxobutanoate: step 1/4.</text>
</comment>
<comment type="subunit">
    <text evidence="1">Homodimer.</text>
</comment>
<comment type="subcellular location">
    <subcellularLocation>
        <location evidence="1">Cytoplasm</location>
    </subcellularLocation>
</comment>
<comment type="similarity">
    <text evidence="1">Belongs to the alpha-IPM synthase/homocitrate synthase family. LeuA type 1 subfamily.</text>
</comment>
<name>LEU1_BACAH</name>
<gene>
    <name evidence="1" type="primary">leuA</name>
    <name type="ordered locus">BALH_1255</name>
</gene>
<proteinExistence type="inferred from homology"/>
<reference key="1">
    <citation type="journal article" date="2007" name="J. Bacteriol.">
        <title>The complete genome sequence of Bacillus thuringiensis Al Hakam.</title>
        <authorList>
            <person name="Challacombe J.F."/>
            <person name="Altherr M.R."/>
            <person name="Xie G."/>
            <person name="Bhotika S.S."/>
            <person name="Brown N."/>
            <person name="Bruce D."/>
            <person name="Campbell C.S."/>
            <person name="Campbell M.L."/>
            <person name="Chen J."/>
            <person name="Chertkov O."/>
            <person name="Cleland C."/>
            <person name="Dimitrijevic M."/>
            <person name="Doggett N.A."/>
            <person name="Fawcett J.J."/>
            <person name="Glavina T."/>
            <person name="Goodwin L.A."/>
            <person name="Green L.D."/>
            <person name="Han C.S."/>
            <person name="Hill K.K."/>
            <person name="Hitchcock P."/>
            <person name="Jackson P.J."/>
            <person name="Keim P."/>
            <person name="Kewalramani A.R."/>
            <person name="Longmire J."/>
            <person name="Lucas S."/>
            <person name="Malfatti S."/>
            <person name="Martinez D."/>
            <person name="McMurry K."/>
            <person name="Meincke L.J."/>
            <person name="Misra M."/>
            <person name="Moseman B.L."/>
            <person name="Mundt M."/>
            <person name="Munk A.C."/>
            <person name="Okinaka R.T."/>
            <person name="Parson-Quintana B."/>
            <person name="Reilly L.P."/>
            <person name="Richardson P."/>
            <person name="Robinson D.L."/>
            <person name="Saunders E."/>
            <person name="Tapia R."/>
            <person name="Tesmer J.G."/>
            <person name="Thayer N."/>
            <person name="Thompson L.S."/>
            <person name="Tice H."/>
            <person name="Ticknor L.O."/>
            <person name="Wills P.L."/>
            <person name="Gilna P."/>
            <person name="Brettin T.S."/>
        </authorList>
    </citation>
    <scope>NUCLEOTIDE SEQUENCE [LARGE SCALE GENOMIC DNA]</scope>
    <source>
        <strain>Al Hakam</strain>
    </source>
</reference>
<organism>
    <name type="scientific">Bacillus thuringiensis (strain Al Hakam)</name>
    <dbReference type="NCBI Taxonomy" id="412694"/>
    <lineage>
        <taxon>Bacteria</taxon>
        <taxon>Bacillati</taxon>
        <taxon>Bacillota</taxon>
        <taxon>Bacilli</taxon>
        <taxon>Bacillales</taxon>
        <taxon>Bacillaceae</taxon>
        <taxon>Bacillus</taxon>
        <taxon>Bacillus cereus group</taxon>
    </lineage>
</organism>
<dbReference type="EC" id="2.3.3.13" evidence="1"/>
<dbReference type="EMBL" id="CP000485">
    <property type="protein sequence ID" value="ABK84605.1"/>
    <property type="molecule type" value="Genomic_DNA"/>
</dbReference>
<dbReference type="RefSeq" id="WP_000721814.1">
    <property type="nucleotide sequence ID" value="NC_008600.1"/>
</dbReference>
<dbReference type="SMR" id="A0RBL2"/>
<dbReference type="KEGG" id="btl:BALH_1255"/>
<dbReference type="HOGENOM" id="CLU_022158_0_1_9"/>
<dbReference type="UniPathway" id="UPA00048">
    <property type="reaction ID" value="UER00070"/>
</dbReference>
<dbReference type="GO" id="GO:0005737">
    <property type="term" value="C:cytoplasm"/>
    <property type="evidence" value="ECO:0007669"/>
    <property type="project" value="UniProtKB-SubCell"/>
</dbReference>
<dbReference type="GO" id="GO:0003852">
    <property type="term" value="F:2-isopropylmalate synthase activity"/>
    <property type="evidence" value="ECO:0007669"/>
    <property type="project" value="UniProtKB-UniRule"/>
</dbReference>
<dbReference type="GO" id="GO:0003985">
    <property type="term" value="F:acetyl-CoA C-acetyltransferase activity"/>
    <property type="evidence" value="ECO:0007669"/>
    <property type="project" value="UniProtKB-UniRule"/>
</dbReference>
<dbReference type="GO" id="GO:0030145">
    <property type="term" value="F:manganese ion binding"/>
    <property type="evidence" value="ECO:0007669"/>
    <property type="project" value="UniProtKB-UniRule"/>
</dbReference>
<dbReference type="GO" id="GO:0009098">
    <property type="term" value="P:L-leucine biosynthetic process"/>
    <property type="evidence" value="ECO:0007669"/>
    <property type="project" value="UniProtKB-UniRule"/>
</dbReference>
<dbReference type="CDD" id="cd07940">
    <property type="entry name" value="DRE_TIM_IPMS"/>
    <property type="match status" value="1"/>
</dbReference>
<dbReference type="FunFam" id="1.10.238.260:FF:000001">
    <property type="entry name" value="2-isopropylmalate synthase"/>
    <property type="match status" value="1"/>
</dbReference>
<dbReference type="FunFam" id="3.20.20.70:FF:000287">
    <property type="entry name" value="2-isopropylmalate synthase"/>
    <property type="match status" value="1"/>
</dbReference>
<dbReference type="FunFam" id="3.30.160.270:FF:000003">
    <property type="entry name" value="2-isopropylmalate synthase"/>
    <property type="match status" value="1"/>
</dbReference>
<dbReference type="Gene3D" id="1.10.238.260">
    <property type="match status" value="1"/>
</dbReference>
<dbReference type="Gene3D" id="3.30.160.270">
    <property type="match status" value="1"/>
</dbReference>
<dbReference type="Gene3D" id="3.20.20.70">
    <property type="entry name" value="Aldolase class I"/>
    <property type="match status" value="1"/>
</dbReference>
<dbReference type="HAMAP" id="MF_01025">
    <property type="entry name" value="LeuA_type1"/>
    <property type="match status" value="1"/>
</dbReference>
<dbReference type="InterPro" id="IPR050073">
    <property type="entry name" value="2-IPM_HCS-like"/>
</dbReference>
<dbReference type="InterPro" id="IPR013709">
    <property type="entry name" value="2-isopropylmalate_synth_dimer"/>
</dbReference>
<dbReference type="InterPro" id="IPR002034">
    <property type="entry name" value="AIPM/Hcit_synth_CS"/>
</dbReference>
<dbReference type="InterPro" id="IPR013785">
    <property type="entry name" value="Aldolase_TIM"/>
</dbReference>
<dbReference type="InterPro" id="IPR054691">
    <property type="entry name" value="LeuA/HCS_post-cat"/>
</dbReference>
<dbReference type="InterPro" id="IPR036230">
    <property type="entry name" value="LeuA_allosteric_dom_sf"/>
</dbReference>
<dbReference type="InterPro" id="IPR005671">
    <property type="entry name" value="LeuA_bact_synth"/>
</dbReference>
<dbReference type="InterPro" id="IPR000891">
    <property type="entry name" value="PYR_CT"/>
</dbReference>
<dbReference type="NCBIfam" id="TIGR00973">
    <property type="entry name" value="leuA_bact"/>
    <property type="match status" value="1"/>
</dbReference>
<dbReference type="NCBIfam" id="NF002086">
    <property type="entry name" value="PRK00915.1-3"/>
    <property type="match status" value="1"/>
</dbReference>
<dbReference type="NCBIfam" id="NF002088">
    <property type="entry name" value="PRK00915.1-5"/>
    <property type="match status" value="1"/>
</dbReference>
<dbReference type="PANTHER" id="PTHR10277:SF9">
    <property type="entry name" value="2-ISOPROPYLMALATE SYNTHASE 1, CHLOROPLASTIC-RELATED"/>
    <property type="match status" value="1"/>
</dbReference>
<dbReference type="PANTHER" id="PTHR10277">
    <property type="entry name" value="HOMOCITRATE SYNTHASE-RELATED"/>
    <property type="match status" value="1"/>
</dbReference>
<dbReference type="Pfam" id="PF22617">
    <property type="entry name" value="HCS_D2"/>
    <property type="match status" value="1"/>
</dbReference>
<dbReference type="Pfam" id="PF00682">
    <property type="entry name" value="HMGL-like"/>
    <property type="match status" value="1"/>
</dbReference>
<dbReference type="Pfam" id="PF08502">
    <property type="entry name" value="LeuA_dimer"/>
    <property type="match status" value="1"/>
</dbReference>
<dbReference type="SMART" id="SM00917">
    <property type="entry name" value="LeuA_dimer"/>
    <property type="match status" value="1"/>
</dbReference>
<dbReference type="SUPFAM" id="SSF110921">
    <property type="entry name" value="2-isopropylmalate synthase LeuA, allosteric (dimerisation) domain"/>
    <property type="match status" value="1"/>
</dbReference>
<dbReference type="SUPFAM" id="SSF51569">
    <property type="entry name" value="Aldolase"/>
    <property type="match status" value="1"/>
</dbReference>
<dbReference type="PROSITE" id="PS00815">
    <property type="entry name" value="AIPM_HOMOCIT_SYNTH_1"/>
    <property type="match status" value="1"/>
</dbReference>
<dbReference type="PROSITE" id="PS00816">
    <property type="entry name" value="AIPM_HOMOCIT_SYNTH_2"/>
    <property type="match status" value="1"/>
</dbReference>
<dbReference type="PROSITE" id="PS50991">
    <property type="entry name" value="PYR_CT"/>
    <property type="match status" value="1"/>
</dbReference>
<accession>A0RBL2</accession>
<feature type="chain" id="PRO_1000149128" description="2-isopropylmalate synthase">
    <location>
        <begin position="1"/>
        <end position="506"/>
    </location>
</feature>
<feature type="domain" description="Pyruvate carboxyltransferase" evidence="1">
    <location>
        <begin position="4"/>
        <end position="266"/>
    </location>
</feature>
<feature type="region of interest" description="Regulatory domain" evidence="1">
    <location>
        <begin position="390"/>
        <end position="506"/>
    </location>
</feature>
<feature type="binding site" evidence="1">
    <location>
        <position position="13"/>
    </location>
    <ligand>
        <name>Mn(2+)</name>
        <dbReference type="ChEBI" id="CHEBI:29035"/>
    </ligand>
</feature>
<feature type="binding site" evidence="1">
    <location>
        <position position="201"/>
    </location>
    <ligand>
        <name>Mn(2+)</name>
        <dbReference type="ChEBI" id="CHEBI:29035"/>
    </ligand>
</feature>
<feature type="binding site" evidence="1">
    <location>
        <position position="203"/>
    </location>
    <ligand>
        <name>Mn(2+)</name>
        <dbReference type="ChEBI" id="CHEBI:29035"/>
    </ligand>
</feature>
<feature type="binding site" evidence="1">
    <location>
        <position position="237"/>
    </location>
    <ligand>
        <name>Mn(2+)</name>
        <dbReference type="ChEBI" id="CHEBI:29035"/>
    </ligand>
</feature>
<evidence type="ECO:0000255" key="1">
    <source>
        <dbReference type="HAMAP-Rule" id="MF_01025"/>
    </source>
</evidence>
<protein>
    <recommendedName>
        <fullName evidence="1">2-isopropylmalate synthase</fullName>
        <ecNumber evidence="1">2.3.3.13</ecNumber>
    </recommendedName>
    <alternativeName>
        <fullName evidence="1">Alpha-IPM synthase</fullName>
    </alternativeName>
    <alternativeName>
        <fullName evidence="1">Alpha-isopropylmalate synthase</fullName>
    </alternativeName>
</protein>
<sequence length="506" mass="55417">MKKILFMDTTLRDGEQSPGVNLNEQEKLQIARQLERLGIHVMEAGFAAASEGDFQSVKRIANTIQNATVMSLARAKESDIRRAYEAVKGAVSPRLHVFLATSDIHMKYKLCMSKEDVLDSIYRSVTLGKSLFPTVQFSAEDATRTSRDFLAEAVEVAIRAGANVINIPDTVGYTNPEEYYSLFKYLQESVPSYEKAIFSCHCHDDLGMAVANSLAAVEGGALQVEGTINGIGERAGNAALEEVAVALHIRKDFYKAEPSMTLKEIKATSTLVSRLTGMVVPKNKAIVGANAFAHESGIHQDGVLKEVTTYEIIEPALVGESQNLFVLGKHSGRHAFTEKMKELGYEFTNDERDAVFEAFKKLADRKKEITEEDLRALMLGEAAFAAQQYNITQLQVHFVSNSTQCATVVLKDEEGNVFEDAATGSGSIEAIYNAIQRILGLECELADYRIQSITQGQDALAHVHVELKEGAHQVSGFGVAQDVLEASARAYVHAAGKLKSFIQLVK</sequence>
<keyword id="KW-0028">Amino-acid biosynthesis</keyword>
<keyword id="KW-0100">Branched-chain amino acid biosynthesis</keyword>
<keyword id="KW-0963">Cytoplasm</keyword>
<keyword id="KW-0432">Leucine biosynthesis</keyword>
<keyword id="KW-0464">Manganese</keyword>
<keyword id="KW-0479">Metal-binding</keyword>
<keyword id="KW-0808">Transferase</keyword>